<keyword id="KW-0045">Antibiotic biosynthesis</keyword>
<keyword id="KW-0408">Iron</keyword>
<keyword id="KW-0560">Oxidoreductase</keyword>
<keyword id="KW-0847">Vitamin C</keyword>
<reference key="1">
    <citation type="journal article" date="1993" name="Mol. Gen. Genet.">
        <title>Characterization and expression in Streptomyces lividans of cefD and cefE genes from Nocardia lactamdurans: the organization of the cephamycin gene cluster differs from that in Streptomyces clavuligerus.</title>
        <authorList>
            <person name="Coque J.J.R."/>
            <person name="Martin J.F."/>
            <person name="Liras P."/>
        </authorList>
    </citation>
    <scope>NUCLEOTIDE SEQUENCE [GENOMIC DNA]</scope>
</reference>
<sequence length="314" mass="34530">MTDATVPTFDLAELREGLHQEEFRHCLREKGVFYLKGTGLPAEADHASGREIAVDFFDHGTEAEKKAVMTPIPTIRRGYAGLESESTAQITNTGKYTDYSMSYSMGTADNLFPSAEFEKAWEDYFARMYRASQDVARQVLTSVGAEPEVGMDAFLDCEPLLRLRYFPEVPEDRVAEEQPLRMAPHYDLSIVTLIHQTPCANGFVSLQVEVDGSYVDIPAQPGAVLVFCGAVATLVADGAIKAPKHHVAAPGADKRVGSSRTSSVFFLRPNGDFRFSVPRARECGFDVSIPAETATFDDWIGGNYINIRKTAAAR</sequence>
<comment type="function">
    <text>Catalyzes the step from penicillin N to deacetoxy-cephalosporin C.</text>
</comment>
<comment type="catalytic activity">
    <reaction>
        <text>penicillin N + 2-oxoglutarate + O2 = deacetoxycephalosporin C + succinate + CO2 + H2O</text>
        <dbReference type="Rhea" id="RHEA:20748"/>
        <dbReference type="ChEBI" id="CHEBI:15377"/>
        <dbReference type="ChEBI" id="CHEBI:15379"/>
        <dbReference type="ChEBI" id="CHEBI:16526"/>
        <dbReference type="ChEBI" id="CHEBI:16810"/>
        <dbReference type="ChEBI" id="CHEBI:30031"/>
        <dbReference type="ChEBI" id="CHEBI:58408"/>
        <dbReference type="ChEBI" id="CHEBI:58415"/>
        <dbReference type="EC" id="1.14.20.1"/>
    </reaction>
</comment>
<comment type="cofactor">
    <cofactor>
        <name>Fe cation</name>
        <dbReference type="ChEBI" id="CHEBI:24875"/>
    </cofactor>
</comment>
<comment type="cofactor">
    <cofactor>
        <name>L-ascorbate</name>
        <dbReference type="ChEBI" id="CHEBI:38290"/>
    </cofactor>
</comment>
<comment type="pathway">
    <text>Antibiotic biosynthesis; cephalosporin C biosynthesis.</text>
</comment>
<comment type="similarity">
    <text evidence="2">Belongs to the iron/ascorbate-dependent oxidoreductase family.</text>
</comment>
<proteinExistence type="inferred from homology"/>
<gene>
    <name type="primary">cefE</name>
</gene>
<name>CEFE_AMYLA</name>
<accession>Q03047</accession>
<feature type="chain" id="PRO_0000219510" description="Deacetoxycephalosporin C synthase">
    <location>
        <begin position="1"/>
        <end position="314"/>
    </location>
</feature>
<feature type="domain" description="Fe2OG dioxygenase" evidence="1">
    <location>
        <begin position="156"/>
        <end position="269"/>
    </location>
</feature>
<protein>
    <recommendedName>
        <fullName>Deacetoxycephalosporin C synthase</fullName>
        <shortName>DAOCS</shortName>
        <ecNumber>1.14.20.1</ecNumber>
    </recommendedName>
    <alternativeName>
        <fullName>Expandase</fullName>
    </alternativeName>
</protein>
<dbReference type="EC" id="1.14.20.1"/>
<dbReference type="EMBL" id="Z13974">
    <property type="protein sequence ID" value="CAA78376.1"/>
    <property type="molecule type" value="Genomic_DNA"/>
</dbReference>
<dbReference type="PIR" id="S30900">
    <property type="entry name" value="S30900"/>
</dbReference>
<dbReference type="SMR" id="Q03047"/>
<dbReference type="BRENDA" id="1.14.20.1">
    <property type="organism ID" value="311"/>
</dbReference>
<dbReference type="UniPathway" id="UPA00172"/>
<dbReference type="GO" id="GO:0050599">
    <property type="term" value="F:deacetoxycephalosporin-C synthase activity"/>
    <property type="evidence" value="ECO:0007669"/>
    <property type="project" value="UniProtKB-EC"/>
</dbReference>
<dbReference type="GO" id="GO:0031418">
    <property type="term" value="F:L-ascorbic acid binding"/>
    <property type="evidence" value="ECO:0007669"/>
    <property type="project" value="UniProtKB-KW"/>
</dbReference>
<dbReference type="GO" id="GO:0017000">
    <property type="term" value="P:antibiotic biosynthetic process"/>
    <property type="evidence" value="ECO:0007669"/>
    <property type="project" value="UniProtKB-KW"/>
</dbReference>
<dbReference type="Gene3D" id="2.60.120.330">
    <property type="entry name" value="B-lactam Antibiotic, Isopenicillin N Synthase, Chain"/>
    <property type="match status" value="1"/>
</dbReference>
<dbReference type="InterPro" id="IPR026992">
    <property type="entry name" value="DIOX_N"/>
</dbReference>
<dbReference type="InterPro" id="IPR044861">
    <property type="entry name" value="IPNS-like_FE2OG_OXY"/>
</dbReference>
<dbReference type="InterPro" id="IPR027443">
    <property type="entry name" value="IPNS-like_sf"/>
</dbReference>
<dbReference type="InterPro" id="IPR050231">
    <property type="entry name" value="Iron_ascorbate_oxido_reductase"/>
</dbReference>
<dbReference type="InterPro" id="IPR005123">
    <property type="entry name" value="Oxoglu/Fe-dep_dioxygenase_dom"/>
</dbReference>
<dbReference type="PANTHER" id="PTHR47990">
    <property type="entry name" value="2-OXOGLUTARATE (2OG) AND FE(II)-DEPENDENT OXYGENASE SUPERFAMILY PROTEIN-RELATED"/>
    <property type="match status" value="1"/>
</dbReference>
<dbReference type="Pfam" id="PF03171">
    <property type="entry name" value="2OG-FeII_Oxy"/>
    <property type="match status" value="1"/>
</dbReference>
<dbReference type="Pfam" id="PF14226">
    <property type="entry name" value="DIOX_N"/>
    <property type="match status" value="1"/>
</dbReference>
<dbReference type="SUPFAM" id="SSF51197">
    <property type="entry name" value="Clavaminate synthase-like"/>
    <property type="match status" value="1"/>
</dbReference>
<dbReference type="PROSITE" id="PS51471">
    <property type="entry name" value="FE2OG_OXY"/>
    <property type="match status" value="1"/>
</dbReference>
<evidence type="ECO:0000255" key="1">
    <source>
        <dbReference type="PROSITE-ProRule" id="PRU00805"/>
    </source>
</evidence>
<evidence type="ECO:0000305" key="2"/>
<organism>
    <name type="scientific">Amycolatopsis lactamdurans</name>
    <name type="common">Nocardia lactamdurans</name>
    <dbReference type="NCBI Taxonomy" id="1913"/>
    <lineage>
        <taxon>Bacteria</taxon>
        <taxon>Bacillati</taxon>
        <taxon>Actinomycetota</taxon>
        <taxon>Actinomycetes</taxon>
        <taxon>Pseudonocardiales</taxon>
        <taxon>Pseudonocardiaceae</taxon>
        <taxon>Amycolatopsis</taxon>
    </lineage>
</organism>